<organism>
    <name type="scientific">Caulobacter vibrioides (strain ATCC 19089 / CIP 103742 / CB 15)</name>
    <name type="common">Caulobacter crescentus</name>
    <dbReference type="NCBI Taxonomy" id="190650"/>
    <lineage>
        <taxon>Bacteria</taxon>
        <taxon>Pseudomonadati</taxon>
        <taxon>Pseudomonadota</taxon>
        <taxon>Alphaproteobacteria</taxon>
        <taxon>Caulobacterales</taxon>
        <taxon>Caulobacteraceae</taxon>
        <taxon>Caulobacter</taxon>
    </lineage>
</organism>
<reference key="1">
    <citation type="journal article" date="2001" name="Proc. Natl. Acad. Sci. U.S.A.">
        <title>Complete genome sequence of Caulobacter crescentus.</title>
        <authorList>
            <person name="Nierman W.C."/>
            <person name="Feldblyum T.V."/>
            <person name="Laub M.T."/>
            <person name="Paulsen I.T."/>
            <person name="Nelson K.E."/>
            <person name="Eisen J.A."/>
            <person name="Heidelberg J.F."/>
            <person name="Alley M.R.K."/>
            <person name="Ohta N."/>
            <person name="Maddock J.R."/>
            <person name="Potocka I."/>
            <person name="Nelson W.C."/>
            <person name="Newton A."/>
            <person name="Stephens C."/>
            <person name="Phadke N.D."/>
            <person name="Ely B."/>
            <person name="DeBoy R.T."/>
            <person name="Dodson R.J."/>
            <person name="Durkin A.S."/>
            <person name="Gwinn M.L."/>
            <person name="Haft D.H."/>
            <person name="Kolonay J.F."/>
            <person name="Smit J."/>
            <person name="Craven M.B."/>
            <person name="Khouri H.M."/>
            <person name="Shetty J."/>
            <person name="Berry K.J."/>
            <person name="Utterback T.R."/>
            <person name="Tran K."/>
            <person name="Wolf A.M."/>
            <person name="Vamathevan J.J."/>
            <person name="Ermolaeva M.D."/>
            <person name="White O."/>
            <person name="Salzberg S.L."/>
            <person name="Venter J.C."/>
            <person name="Shapiro L."/>
            <person name="Fraser C.M."/>
        </authorList>
    </citation>
    <scope>NUCLEOTIDE SEQUENCE [LARGE SCALE GENOMIC DNA]</scope>
    <source>
        <strain>ATCC 19089 / CIP 103742 / CB 15</strain>
    </source>
</reference>
<feature type="chain" id="PRO_0000205298" description="Deoxyguanosinetriphosphate triphosphohydrolase-like protein">
    <location>
        <begin position="1"/>
        <end position="394"/>
    </location>
</feature>
<feature type="domain" description="HD" evidence="2">
    <location>
        <begin position="70"/>
        <end position="210"/>
    </location>
</feature>
<feature type="region of interest" description="Disordered" evidence="3">
    <location>
        <begin position="1"/>
        <end position="36"/>
    </location>
</feature>
<feature type="compositionally biased region" description="Basic and acidic residues" evidence="3">
    <location>
        <begin position="25"/>
        <end position="36"/>
    </location>
</feature>
<name>DGTL1_CAUVC</name>
<protein>
    <recommendedName>
        <fullName evidence="1">Deoxyguanosinetriphosphate triphosphohydrolase-like protein</fullName>
    </recommendedName>
</protein>
<evidence type="ECO:0000255" key="1">
    <source>
        <dbReference type="HAMAP-Rule" id="MF_01212"/>
    </source>
</evidence>
<evidence type="ECO:0000255" key="2">
    <source>
        <dbReference type="PROSITE-ProRule" id="PRU01175"/>
    </source>
</evidence>
<evidence type="ECO:0000256" key="3">
    <source>
        <dbReference type="SAM" id="MobiDB-lite"/>
    </source>
</evidence>
<proteinExistence type="inferred from homology"/>
<dbReference type="EMBL" id="AE005673">
    <property type="protein sequence ID" value="AAK23983.1"/>
    <property type="molecule type" value="Genomic_DNA"/>
</dbReference>
<dbReference type="PIR" id="C87498">
    <property type="entry name" value="C87498"/>
</dbReference>
<dbReference type="RefSeq" id="NP_420815.1">
    <property type="nucleotide sequence ID" value="NC_002696.2"/>
</dbReference>
<dbReference type="RefSeq" id="WP_010919874.1">
    <property type="nucleotide sequence ID" value="NC_002696.2"/>
</dbReference>
<dbReference type="SMR" id="Q9A6S5"/>
<dbReference type="STRING" id="190650.CC_2008"/>
<dbReference type="DNASU" id="942787"/>
<dbReference type="EnsemblBacteria" id="AAK23983">
    <property type="protein sequence ID" value="AAK23983"/>
    <property type="gene ID" value="CC_2008"/>
</dbReference>
<dbReference type="KEGG" id="ccr:CC_2008"/>
<dbReference type="PATRIC" id="fig|190650.5.peg.2027"/>
<dbReference type="eggNOG" id="COG0232">
    <property type="taxonomic scope" value="Bacteria"/>
</dbReference>
<dbReference type="HOGENOM" id="CLU_028163_1_0_5"/>
<dbReference type="BioCyc" id="CAULO:CC2008-MONOMER"/>
<dbReference type="Proteomes" id="UP000001816">
    <property type="component" value="Chromosome"/>
</dbReference>
<dbReference type="GO" id="GO:0008832">
    <property type="term" value="F:dGTPase activity"/>
    <property type="evidence" value="ECO:0007669"/>
    <property type="project" value="TreeGrafter"/>
</dbReference>
<dbReference type="GO" id="GO:0006203">
    <property type="term" value="P:dGTP catabolic process"/>
    <property type="evidence" value="ECO:0007669"/>
    <property type="project" value="TreeGrafter"/>
</dbReference>
<dbReference type="CDD" id="cd00077">
    <property type="entry name" value="HDc"/>
    <property type="match status" value="1"/>
</dbReference>
<dbReference type="Gene3D" id="1.10.3210.10">
    <property type="entry name" value="Hypothetical protein af1432"/>
    <property type="match status" value="1"/>
</dbReference>
<dbReference type="HAMAP" id="MF_01212">
    <property type="entry name" value="dGTPase_type2"/>
    <property type="match status" value="1"/>
</dbReference>
<dbReference type="InterPro" id="IPR006261">
    <property type="entry name" value="dGTPase"/>
</dbReference>
<dbReference type="InterPro" id="IPR050135">
    <property type="entry name" value="dGTPase-like"/>
</dbReference>
<dbReference type="InterPro" id="IPR023023">
    <property type="entry name" value="dNTPase_2"/>
</dbReference>
<dbReference type="InterPro" id="IPR003607">
    <property type="entry name" value="HD/PDEase_dom"/>
</dbReference>
<dbReference type="InterPro" id="IPR006674">
    <property type="entry name" value="HD_domain"/>
</dbReference>
<dbReference type="InterPro" id="IPR006675">
    <property type="entry name" value="HDIG_dom"/>
</dbReference>
<dbReference type="InterPro" id="IPR026875">
    <property type="entry name" value="PHydrolase_assoc_dom"/>
</dbReference>
<dbReference type="NCBIfam" id="TIGR01353">
    <property type="entry name" value="dGTP_triPase"/>
    <property type="match status" value="1"/>
</dbReference>
<dbReference type="NCBIfam" id="TIGR00277">
    <property type="entry name" value="HDIG"/>
    <property type="match status" value="1"/>
</dbReference>
<dbReference type="NCBIfam" id="NF002326">
    <property type="entry name" value="PRK01286.1-1"/>
    <property type="match status" value="1"/>
</dbReference>
<dbReference type="NCBIfam" id="NF002328">
    <property type="entry name" value="PRK01286.1-3"/>
    <property type="match status" value="1"/>
</dbReference>
<dbReference type="PANTHER" id="PTHR11373:SF43">
    <property type="entry name" value="DEOXYGUANOSINETRIPHOSPHATE TRIPHOSPHOHYDROLASE-LIKE PROTEIN"/>
    <property type="match status" value="1"/>
</dbReference>
<dbReference type="PANTHER" id="PTHR11373">
    <property type="entry name" value="DEOXYNUCLEOSIDE TRIPHOSPHATE TRIPHOSPHOHYDROLASE"/>
    <property type="match status" value="1"/>
</dbReference>
<dbReference type="Pfam" id="PF01966">
    <property type="entry name" value="HD"/>
    <property type="match status" value="1"/>
</dbReference>
<dbReference type="Pfam" id="PF13286">
    <property type="entry name" value="HD_assoc"/>
    <property type="match status" value="1"/>
</dbReference>
<dbReference type="SMART" id="SM00471">
    <property type="entry name" value="HDc"/>
    <property type="match status" value="1"/>
</dbReference>
<dbReference type="SUPFAM" id="SSF109604">
    <property type="entry name" value="HD-domain/PDEase-like"/>
    <property type="match status" value="1"/>
</dbReference>
<dbReference type="PROSITE" id="PS51831">
    <property type="entry name" value="HD"/>
    <property type="match status" value="1"/>
</dbReference>
<comment type="similarity">
    <text evidence="1">Belongs to the dGTPase family. Type 2 subfamily.</text>
</comment>
<sequence length="394" mass="44624">MSQAPYFVPRAPYAEDPSKSKGRRFKEDESRTRTPFARDRDRIIHTSAFRRLKEKTQVFVAHEGDNFRTRLTHTLEVAQVARSLATALGLDADLAETIALAHDLGHPPFGHAGEDELEIQMREYGGFDHNVQTFRVVTELEHRYPDFIGLNLTWETLEGVIKHNGPVTNKLGKPSWKAISKYDNEYELGLGTWASAEAQVAALADDIAYNNHDVDDGVTAGLFTLDDLMDVPLIGPILAAVKSERPDLDARLTHLEAVRRMIGAMVDDVMGETLHRAAASGVQSADDVRALDHALVAFSSDMAEDLARLRGFLYERMYRHWRVNRTRSQARRILGEMFALFLREPEVLPTVWFAKSQNRDEAGRARVVCDYIAGMTDRFAIEEHRKLFHLDVWN</sequence>
<accession>Q9A6S5</accession>
<keyword id="KW-0378">Hydrolase</keyword>
<keyword id="KW-1185">Reference proteome</keyword>
<gene>
    <name type="ordered locus">CC_2008</name>
</gene>